<organismHost>
    <name type="scientific">Macaca mulatta</name>
    <name type="common">Rhesus macaque</name>
    <dbReference type="NCBI Taxonomy" id="9544"/>
</organismHost>
<organism>
    <name type="scientific">Macaca mulata papillomavirus 1</name>
    <name type="common">Rhpv 1</name>
    <name type="synonym">Rhesus papillomavirus type 1</name>
    <dbReference type="NCBI Taxonomy" id="2779844"/>
    <lineage>
        <taxon>Viruses</taxon>
        <taxon>Monodnaviria</taxon>
        <taxon>Shotokuvirae</taxon>
        <taxon>Cossaviricota</taxon>
        <taxon>Papovaviricetes</taxon>
        <taxon>Zurhausenvirales</taxon>
        <taxon>Papillomaviridae</taxon>
        <taxon>Firstpapillomavirinae</taxon>
        <taxon>Alphapapillomavirus</taxon>
        <taxon>Rhesus papillomavirus type 1</taxon>
    </lineage>
</organism>
<reference key="1">
    <citation type="journal article" date="1991" name="Virology">
        <title>Characterization of the complete RhPV 1 genomic sequence and an integration locus from a metastatic tumor.</title>
        <authorList>
            <person name="Ostrow R.S."/>
            <person name="Labresh K.V."/>
            <person name="Faras A.J."/>
        </authorList>
    </citation>
    <scope>NUCLEOTIDE SEQUENCE [GENOMIC DNA]</scope>
</reference>
<accession>P22156</accession>
<comment type="function">
    <text evidence="1">Plays a role in the initiation of viral DNA replication. A dimer of E2 interacts with a dimer of E1 in order to improve specificity of E1 DNA binding activity. Once the complex recognizes and binds DNA at specific sites, the E2 dimer is removed from DNA. E2 also regulates viral transcription through binding to the E2RE response element (5'-ACCNNNNNNGGT-3') present in multiple copies in the regulatory regions of the viral genome. Activates or represses transcription depending on E2RE's position with regards to proximal promoter elements including the TATA-box. Repression occurs by sterically hindering the assembly of the transcription initiation complex.</text>
</comment>
<comment type="subunit">
    <text evidence="1">Binds DNA as homodimer. Interacts with protein E1; this interaction greatly increases E1 DNA-binding activity. Interacts with protein L1; this interaction enhances E2-dependent replication and transcription activation. Interacts with protein L2; this interaction inhibits E2 transcriptional activity but not DNA replication function E2. Interacts with protein E7; this interaction inhibits E7 oncogenic activity. Interacts with host TAF1; this interaction modulates E2-dependent transcriptional regulation. Interacts with host BRD4; this interaction mediates E2 transcriptional activation function. Additionally, the interaction with host BRD4 on mitotic chromosomes mediates tethering of the viral genome. Interacts with host TOPBP1; this interaction is required for optimal viral DNA replication.</text>
</comment>
<comment type="subcellular location">
    <subcellularLocation>
        <location evidence="1">Host nucleus</location>
    </subcellularLocation>
</comment>
<comment type="PTM">
    <text evidence="1">Phosphorylated.</text>
</comment>
<comment type="PTM">
    <text evidence="1">Sumoylation plays a regulatory role in E2 transcriptional activity.</text>
</comment>
<comment type="similarity">
    <text evidence="1">Belongs to the papillomaviridae E2 protein family.</text>
</comment>
<protein>
    <recommendedName>
        <fullName evidence="1">Regulatory protein E2</fullName>
    </recommendedName>
</protein>
<gene>
    <name evidence="1" type="primary">E2</name>
</gene>
<feature type="chain" id="PRO_0000133248" description="Regulatory protein E2">
    <location>
        <begin position="1"/>
        <end position="366"/>
    </location>
</feature>
<feature type="region of interest" description="Transactivation domain" evidence="1">
    <location>
        <begin position="1"/>
        <end position="207"/>
    </location>
</feature>
<feature type="region of interest" description="Disordered" evidence="2">
    <location>
        <begin position="224"/>
        <end position="261"/>
    </location>
</feature>
<feature type="region of interest" description="DNA-binding domain" evidence="1">
    <location>
        <begin position="289"/>
        <end position="366"/>
    </location>
</feature>
<feature type="cross-link" description="Glycyl lysine isopeptide (Lys-Gly) (interchain with G-Cter in SUMO)" evidence="1">
    <location>
        <position position="295"/>
    </location>
</feature>
<dbReference type="EMBL" id="M60184">
    <property type="protein sequence ID" value="AAA79314.1"/>
    <property type="molecule type" value="Genomic_DNA"/>
</dbReference>
<dbReference type="PIR" id="D38503">
    <property type="entry name" value="W2WLR1"/>
</dbReference>
<dbReference type="RefSeq" id="NP_043334.1">
    <property type="nucleotide sequence ID" value="NC_001678.1"/>
</dbReference>
<dbReference type="SMR" id="P22156"/>
<dbReference type="GeneID" id="1489009"/>
<dbReference type="KEGG" id="vg:1489009"/>
<dbReference type="Proteomes" id="UP000008169">
    <property type="component" value="Genome"/>
</dbReference>
<dbReference type="GO" id="GO:0042025">
    <property type="term" value="C:host cell nucleus"/>
    <property type="evidence" value="ECO:0007669"/>
    <property type="project" value="UniProtKB-SubCell"/>
</dbReference>
<dbReference type="GO" id="GO:0003677">
    <property type="term" value="F:DNA binding"/>
    <property type="evidence" value="ECO:0007669"/>
    <property type="project" value="UniProtKB-UniRule"/>
</dbReference>
<dbReference type="GO" id="GO:0003700">
    <property type="term" value="F:DNA-binding transcription factor activity"/>
    <property type="evidence" value="ECO:0007669"/>
    <property type="project" value="UniProtKB-UniRule"/>
</dbReference>
<dbReference type="GO" id="GO:0000166">
    <property type="term" value="F:nucleotide binding"/>
    <property type="evidence" value="ECO:0007669"/>
    <property type="project" value="UniProtKB-UniRule"/>
</dbReference>
<dbReference type="GO" id="GO:0006260">
    <property type="term" value="P:DNA replication"/>
    <property type="evidence" value="ECO:0007669"/>
    <property type="project" value="UniProtKB-KW"/>
</dbReference>
<dbReference type="GO" id="GO:0006351">
    <property type="term" value="P:DNA-templated transcription"/>
    <property type="evidence" value="ECO:0007669"/>
    <property type="project" value="UniProtKB-UniRule"/>
</dbReference>
<dbReference type="GO" id="GO:0006275">
    <property type="term" value="P:regulation of DNA replication"/>
    <property type="evidence" value="ECO:0007669"/>
    <property type="project" value="UniProtKB-UniRule"/>
</dbReference>
<dbReference type="GO" id="GO:0039693">
    <property type="term" value="P:viral DNA genome replication"/>
    <property type="evidence" value="ECO:0007669"/>
    <property type="project" value="UniProtKB-UniRule"/>
</dbReference>
<dbReference type="Gene3D" id="3.30.70.330">
    <property type="match status" value="1"/>
</dbReference>
<dbReference type="Gene3D" id="1.10.287.30">
    <property type="entry name" value="E2 (early) protein, N terminal domain, subdomain 1"/>
    <property type="match status" value="1"/>
</dbReference>
<dbReference type="Gene3D" id="2.170.200.10">
    <property type="entry name" value="Papillomavirus E2 early protein domain"/>
    <property type="match status" value="1"/>
</dbReference>
<dbReference type="HAMAP" id="MF_04001">
    <property type="entry name" value="PPV_E2"/>
    <property type="match status" value="1"/>
</dbReference>
<dbReference type="InterPro" id="IPR035975">
    <property type="entry name" value="E2/EBNA1_C_sf"/>
</dbReference>
<dbReference type="InterPro" id="IPR012677">
    <property type="entry name" value="Nucleotide-bd_a/b_plait_sf"/>
</dbReference>
<dbReference type="InterPro" id="IPR000427">
    <property type="entry name" value="Papillomavirus_E2_C"/>
</dbReference>
<dbReference type="InterPro" id="IPR001866">
    <property type="entry name" value="PPV_E2_N"/>
</dbReference>
<dbReference type="InterPro" id="IPR033668">
    <property type="entry name" value="Reg_prot_E2"/>
</dbReference>
<dbReference type="InterPro" id="IPR036050">
    <property type="entry name" value="Regulatory_protein_E2_N"/>
</dbReference>
<dbReference type="InterPro" id="IPR042503">
    <property type="entry name" value="Regulatory_protein_E2_N_1"/>
</dbReference>
<dbReference type="InterPro" id="IPR042504">
    <property type="entry name" value="Regulatory_protein_E2_N_2"/>
</dbReference>
<dbReference type="Pfam" id="PF00511">
    <property type="entry name" value="PPV_E2_C"/>
    <property type="match status" value="1"/>
</dbReference>
<dbReference type="Pfam" id="PF00508">
    <property type="entry name" value="PPV_E2_N"/>
    <property type="match status" value="1"/>
</dbReference>
<dbReference type="SUPFAM" id="SSF51332">
    <property type="entry name" value="E2 regulatory, transactivation domain"/>
    <property type="match status" value="1"/>
</dbReference>
<dbReference type="SUPFAM" id="SSF54957">
    <property type="entry name" value="Viral DNA-binding domain"/>
    <property type="match status" value="1"/>
</dbReference>
<evidence type="ECO:0000255" key="1">
    <source>
        <dbReference type="HAMAP-Rule" id="MF_04001"/>
    </source>
</evidence>
<evidence type="ECO:0000256" key="2">
    <source>
        <dbReference type="SAM" id="MobiDB-lite"/>
    </source>
</evidence>
<keyword id="KW-0010">Activator</keyword>
<keyword id="KW-0235">DNA replication</keyword>
<keyword id="KW-0238">DNA-binding</keyword>
<keyword id="KW-0244">Early protein</keyword>
<keyword id="KW-1048">Host nucleus</keyword>
<keyword id="KW-1017">Isopeptide bond</keyword>
<keyword id="KW-0597">Phosphoprotein</keyword>
<keyword id="KW-1185">Reference proteome</keyword>
<keyword id="KW-0678">Repressor</keyword>
<keyword id="KW-0804">Transcription</keyword>
<keyword id="KW-0805">Transcription regulation</keyword>
<keyword id="KW-0832">Ubl conjugation</keyword>
<sequence length="366" mass="41025">MMEALAERLSALQDRILELYEADSKDLKDQIEHWKCVRQECAVLYKAREVGFSHLNHQVVPSLTVSRAKAHKAIEVQLALESLQNSEYNNEEWTLQDASLEMWHTEPKGCFKKTGVPVTVLFDCDKDNTMEYVLWGHIYVWGDNGWVKTFGEADNWGLHYTVAGEKVYYVQFYEDAKKYGHGNGNGDGYEWEVHVGGTVMHYSDSVSSATHCDKLPTVEIVSGLQHINPSPPPANPSAKENVWSSPAKRVRRSDSGGDPVRALDGKSRSVLCGSAHNNATGSSGDSDYTPIVHLKGESNCLKCLRFRLGKHKHLYINISSTWRWANHASEKAIVTVTFANELQRQQFLNTVKIPSTVTLSQGVMTV</sequence>
<proteinExistence type="inferred from homology"/>
<name>VE2_MMPV1</name>